<gene>
    <name evidence="1" type="primary">ispG</name>
    <name type="ordered locus">MYCGA2950</name>
    <name type="ORF">MGA_1156</name>
</gene>
<evidence type="ECO:0000255" key="1">
    <source>
        <dbReference type="HAMAP-Rule" id="MF_00159"/>
    </source>
</evidence>
<evidence type="ECO:0000305" key="2"/>
<feature type="chain" id="PRO_0000190598" description="4-hydroxy-3-methylbut-2-en-1-yl diphosphate synthase (flavodoxin)">
    <location>
        <begin position="1"/>
        <end position="359"/>
    </location>
</feature>
<feature type="binding site" evidence="1">
    <location>
        <position position="264"/>
    </location>
    <ligand>
        <name>[4Fe-4S] cluster</name>
        <dbReference type="ChEBI" id="CHEBI:49883"/>
    </ligand>
</feature>
<feature type="binding site" evidence="1">
    <location>
        <position position="267"/>
    </location>
    <ligand>
        <name>[4Fe-4S] cluster</name>
        <dbReference type="ChEBI" id="CHEBI:49883"/>
    </ligand>
</feature>
<feature type="binding site" evidence="1">
    <location>
        <position position="299"/>
    </location>
    <ligand>
        <name>[4Fe-4S] cluster</name>
        <dbReference type="ChEBI" id="CHEBI:49883"/>
    </ligand>
</feature>
<feature type="binding site" evidence="1">
    <location>
        <position position="306"/>
    </location>
    <ligand>
        <name>[4Fe-4S] cluster</name>
        <dbReference type="ChEBI" id="CHEBI:49883"/>
    </ligand>
</feature>
<comment type="function">
    <text evidence="1">Converts 2C-methyl-D-erythritol 2,4-cyclodiphosphate (ME-2,4cPP) into 1-hydroxy-2-methyl-2-(E)-butenyl 4-diphosphate.</text>
</comment>
<comment type="catalytic activity">
    <reaction evidence="1">
        <text>(2E)-4-hydroxy-3-methylbut-2-enyl diphosphate + oxidized [flavodoxin] + H2O + 2 H(+) = 2-C-methyl-D-erythritol 2,4-cyclic diphosphate + reduced [flavodoxin]</text>
        <dbReference type="Rhea" id="RHEA:43604"/>
        <dbReference type="Rhea" id="RHEA-COMP:10622"/>
        <dbReference type="Rhea" id="RHEA-COMP:10623"/>
        <dbReference type="ChEBI" id="CHEBI:15377"/>
        <dbReference type="ChEBI" id="CHEBI:15378"/>
        <dbReference type="ChEBI" id="CHEBI:57618"/>
        <dbReference type="ChEBI" id="CHEBI:58210"/>
        <dbReference type="ChEBI" id="CHEBI:58483"/>
        <dbReference type="ChEBI" id="CHEBI:128753"/>
        <dbReference type="EC" id="1.17.7.3"/>
    </reaction>
</comment>
<comment type="cofactor">
    <cofactor evidence="1">
        <name>[4Fe-4S] cluster</name>
        <dbReference type="ChEBI" id="CHEBI:49883"/>
    </cofactor>
    <text evidence="1">Binds 1 [4Fe-4S] cluster.</text>
</comment>
<comment type="pathway">
    <text evidence="1">Isoprenoid biosynthesis; isopentenyl diphosphate biosynthesis via DXP pathway; isopentenyl diphosphate from 1-deoxy-D-xylulose 5-phosphate: step 5/6.</text>
</comment>
<comment type="similarity">
    <text evidence="1">Belongs to the IspG family.</text>
</comment>
<comment type="sequence caution" evidence="2">
    <conflict type="erroneous initiation">
        <sequence resource="EMBL-CDS" id="AAP56645"/>
    </conflict>
</comment>
<protein>
    <recommendedName>
        <fullName evidence="1">4-hydroxy-3-methylbut-2-en-1-yl diphosphate synthase (flavodoxin)</fullName>
        <ecNumber evidence="1">1.17.7.3</ecNumber>
    </recommendedName>
    <alternativeName>
        <fullName evidence="1">1-hydroxy-2-methyl-2-(E)-butenyl 4-diphosphate synthase</fullName>
    </alternativeName>
</protein>
<proteinExistence type="inferred from homology"/>
<reference key="1">
    <citation type="journal article" date="2003" name="Microbiology">
        <title>The complete genome sequence of the avian pathogen Mycoplasma gallisepticum strain R(low).</title>
        <authorList>
            <person name="Papazisi L."/>
            <person name="Gorton T.S."/>
            <person name="Kutish G."/>
            <person name="Markham P.F."/>
            <person name="Browning G.F."/>
            <person name="Nguyen D.K."/>
            <person name="Swartzell S."/>
            <person name="Madan A."/>
            <person name="Mahairas G."/>
            <person name="Geary S.J."/>
        </authorList>
    </citation>
    <scope>NUCLEOTIDE SEQUENCE [LARGE SCALE GENOMIC DNA]</scope>
    <source>
        <strain>R(low / passage 15 / clone 2)</strain>
    </source>
</reference>
<sequence>MYTRTKTKKVFVGDVQIGGQNKIVLQSMTIAKTKHVKKSLKEINDLVKEGADLVRIAVFDDADKRAIRKVVDQSPCPIIADIHFNPDYAIAAIKAGCKKIRLNPGNIKSKEKLREICLLANQYNIPIRVGVNSGSIPYDLMREYGVTSTAMIIAAQRYVRMLKRFGFDNIVISLKTSSALLSMQAYELGAKKFSYPLHLGITEAGTLINGTIKSVAGLTPLLLKGIGDTIRISLSTNPVDEIKVAKKMLNSLGLYENLVDVVACPTCGRLNFDLFKVTKEIEEFVKDLHFPLKVSILGCSVNGPGEAKEADIGIAGGKQEGIIFKKGVVVKSVKQEYLVDELKQMILEEYELFKKKNGK</sequence>
<name>ISPG_MYCGA</name>
<keyword id="KW-0004">4Fe-4S</keyword>
<keyword id="KW-0408">Iron</keyword>
<keyword id="KW-0411">Iron-sulfur</keyword>
<keyword id="KW-0414">Isoprene biosynthesis</keyword>
<keyword id="KW-0479">Metal-binding</keyword>
<keyword id="KW-0560">Oxidoreductase</keyword>
<keyword id="KW-1185">Reference proteome</keyword>
<organism>
    <name type="scientific">Mycoplasmoides gallisepticum (strain R(low / passage 15 / clone 2))</name>
    <name type="common">Mycoplasma gallisepticum</name>
    <dbReference type="NCBI Taxonomy" id="710127"/>
    <lineage>
        <taxon>Bacteria</taxon>
        <taxon>Bacillati</taxon>
        <taxon>Mycoplasmatota</taxon>
        <taxon>Mycoplasmoidales</taxon>
        <taxon>Mycoplasmoidaceae</taxon>
        <taxon>Mycoplasmoides</taxon>
    </lineage>
</organism>
<accession>Q7NBH3</accession>
<dbReference type="EC" id="1.17.7.3" evidence="1"/>
<dbReference type="EMBL" id="AE015450">
    <property type="protein sequence ID" value="AAP56645.1"/>
    <property type="status" value="ALT_INIT"/>
    <property type="molecule type" value="Genomic_DNA"/>
</dbReference>
<dbReference type="SMR" id="Q7NBH3"/>
<dbReference type="KEGG" id="mga:MGA_1156"/>
<dbReference type="HOGENOM" id="CLU_042258_0_0_14"/>
<dbReference type="UniPathway" id="UPA00056">
    <property type="reaction ID" value="UER00096"/>
</dbReference>
<dbReference type="Proteomes" id="UP000001418">
    <property type="component" value="Chromosome"/>
</dbReference>
<dbReference type="GO" id="GO:0051539">
    <property type="term" value="F:4 iron, 4 sulfur cluster binding"/>
    <property type="evidence" value="ECO:0007669"/>
    <property type="project" value="UniProtKB-UniRule"/>
</dbReference>
<dbReference type="GO" id="GO:0046429">
    <property type="term" value="F:4-hydroxy-3-methylbut-2-en-1-yl diphosphate synthase activity (ferredoxin)"/>
    <property type="evidence" value="ECO:0007669"/>
    <property type="project" value="UniProtKB-UniRule"/>
</dbReference>
<dbReference type="GO" id="GO:0141197">
    <property type="term" value="F:4-hydroxy-3-methylbut-2-enyl-diphosphate synthase activity (flavodoxin)"/>
    <property type="evidence" value="ECO:0007669"/>
    <property type="project" value="UniProtKB-EC"/>
</dbReference>
<dbReference type="GO" id="GO:0005506">
    <property type="term" value="F:iron ion binding"/>
    <property type="evidence" value="ECO:0007669"/>
    <property type="project" value="InterPro"/>
</dbReference>
<dbReference type="GO" id="GO:0019288">
    <property type="term" value="P:isopentenyl diphosphate biosynthetic process, methylerythritol 4-phosphate pathway"/>
    <property type="evidence" value="ECO:0007669"/>
    <property type="project" value="UniProtKB-UniRule"/>
</dbReference>
<dbReference type="GO" id="GO:0016114">
    <property type="term" value="P:terpenoid biosynthetic process"/>
    <property type="evidence" value="ECO:0007669"/>
    <property type="project" value="InterPro"/>
</dbReference>
<dbReference type="Gene3D" id="3.20.20.20">
    <property type="entry name" value="Dihydropteroate synthase-like"/>
    <property type="match status" value="1"/>
</dbReference>
<dbReference type="Gene3D" id="3.30.413.10">
    <property type="entry name" value="Sulfite Reductase Hemoprotein, domain 1"/>
    <property type="match status" value="1"/>
</dbReference>
<dbReference type="HAMAP" id="MF_00159">
    <property type="entry name" value="IspG"/>
    <property type="match status" value="1"/>
</dbReference>
<dbReference type="InterPro" id="IPR011005">
    <property type="entry name" value="Dihydropteroate_synth-like_sf"/>
</dbReference>
<dbReference type="InterPro" id="IPR036849">
    <property type="entry name" value="Enolase-like_C_sf"/>
</dbReference>
<dbReference type="InterPro" id="IPR016425">
    <property type="entry name" value="IspG_bac"/>
</dbReference>
<dbReference type="InterPro" id="IPR004588">
    <property type="entry name" value="IspG_bac-typ"/>
</dbReference>
<dbReference type="InterPro" id="IPR045854">
    <property type="entry name" value="NO2/SO3_Rdtase_4Fe4S_sf"/>
</dbReference>
<dbReference type="NCBIfam" id="TIGR00612">
    <property type="entry name" value="ispG_gcpE"/>
    <property type="match status" value="1"/>
</dbReference>
<dbReference type="NCBIfam" id="NF001540">
    <property type="entry name" value="PRK00366.1"/>
    <property type="match status" value="1"/>
</dbReference>
<dbReference type="PANTHER" id="PTHR30454">
    <property type="entry name" value="4-HYDROXY-3-METHYLBUT-2-EN-1-YL DIPHOSPHATE SYNTHASE"/>
    <property type="match status" value="1"/>
</dbReference>
<dbReference type="PANTHER" id="PTHR30454:SF0">
    <property type="entry name" value="4-HYDROXY-3-METHYLBUT-2-EN-1-YL DIPHOSPHATE SYNTHASE (FERREDOXIN), CHLOROPLASTIC"/>
    <property type="match status" value="1"/>
</dbReference>
<dbReference type="Pfam" id="PF04551">
    <property type="entry name" value="GcpE"/>
    <property type="match status" value="1"/>
</dbReference>
<dbReference type="PIRSF" id="PIRSF004640">
    <property type="entry name" value="IspG"/>
    <property type="match status" value="1"/>
</dbReference>
<dbReference type="SUPFAM" id="SSF51604">
    <property type="entry name" value="Enolase C-terminal domain-like"/>
    <property type="match status" value="1"/>
</dbReference>
<dbReference type="SUPFAM" id="SSF56014">
    <property type="entry name" value="Nitrite and sulphite reductase 4Fe-4S domain-like"/>
    <property type="match status" value="1"/>
</dbReference>